<keyword id="KW-0067">ATP-binding</keyword>
<keyword id="KW-0963">Cytoplasm</keyword>
<keyword id="KW-0227">DNA damage</keyword>
<keyword id="KW-0233">DNA recombination</keyword>
<keyword id="KW-0234">DNA repair</keyword>
<keyword id="KW-0238">DNA-binding</keyword>
<keyword id="KW-0547">Nucleotide-binding</keyword>
<keyword id="KW-1185">Reference proteome</keyword>
<keyword id="KW-0742">SOS response</keyword>
<dbReference type="EMBL" id="CP000774">
    <property type="protein sequence ID" value="ABS64187.1"/>
    <property type="molecule type" value="Genomic_DNA"/>
</dbReference>
<dbReference type="RefSeq" id="WP_012111499.1">
    <property type="nucleotide sequence ID" value="NC_009719.1"/>
</dbReference>
<dbReference type="SMR" id="A7HWA4"/>
<dbReference type="STRING" id="402881.Plav_2578"/>
<dbReference type="KEGG" id="pla:Plav_2578"/>
<dbReference type="eggNOG" id="COG0468">
    <property type="taxonomic scope" value="Bacteria"/>
</dbReference>
<dbReference type="HOGENOM" id="CLU_040469_1_2_5"/>
<dbReference type="OrthoDB" id="9776733at2"/>
<dbReference type="Proteomes" id="UP000006377">
    <property type="component" value="Chromosome"/>
</dbReference>
<dbReference type="GO" id="GO:0005829">
    <property type="term" value="C:cytosol"/>
    <property type="evidence" value="ECO:0007669"/>
    <property type="project" value="TreeGrafter"/>
</dbReference>
<dbReference type="GO" id="GO:0005524">
    <property type="term" value="F:ATP binding"/>
    <property type="evidence" value="ECO:0007669"/>
    <property type="project" value="UniProtKB-UniRule"/>
</dbReference>
<dbReference type="GO" id="GO:0016887">
    <property type="term" value="F:ATP hydrolysis activity"/>
    <property type="evidence" value="ECO:0007669"/>
    <property type="project" value="InterPro"/>
</dbReference>
<dbReference type="GO" id="GO:0140664">
    <property type="term" value="F:ATP-dependent DNA damage sensor activity"/>
    <property type="evidence" value="ECO:0007669"/>
    <property type="project" value="InterPro"/>
</dbReference>
<dbReference type="GO" id="GO:0003684">
    <property type="term" value="F:damaged DNA binding"/>
    <property type="evidence" value="ECO:0007669"/>
    <property type="project" value="UniProtKB-UniRule"/>
</dbReference>
<dbReference type="GO" id="GO:0003697">
    <property type="term" value="F:single-stranded DNA binding"/>
    <property type="evidence" value="ECO:0007669"/>
    <property type="project" value="UniProtKB-UniRule"/>
</dbReference>
<dbReference type="GO" id="GO:0006310">
    <property type="term" value="P:DNA recombination"/>
    <property type="evidence" value="ECO:0007669"/>
    <property type="project" value="UniProtKB-UniRule"/>
</dbReference>
<dbReference type="GO" id="GO:0006281">
    <property type="term" value="P:DNA repair"/>
    <property type="evidence" value="ECO:0007669"/>
    <property type="project" value="UniProtKB-UniRule"/>
</dbReference>
<dbReference type="GO" id="GO:0009432">
    <property type="term" value="P:SOS response"/>
    <property type="evidence" value="ECO:0007669"/>
    <property type="project" value="UniProtKB-UniRule"/>
</dbReference>
<dbReference type="CDD" id="cd00983">
    <property type="entry name" value="RecA"/>
    <property type="match status" value="1"/>
</dbReference>
<dbReference type="FunFam" id="3.40.50.300:FF:000087">
    <property type="entry name" value="Recombinase RecA"/>
    <property type="match status" value="1"/>
</dbReference>
<dbReference type="Gene3D" id="3.40.50.300">
    <property type="entry name" value="P-loop containing nucleotide triphosphate hydrolases"/>
    <property type="match status" value="1"/>
</dbReference>
<dbReference type="HAMAP" id="MF_00268">
    <property type="entry name" value="RecA"/>
    <property type="match status" value="1"/>
</dbReference>
<dbReference type="InterPro" id="IPR003593">
    <property type="entry name" value="AAA+_ATPase"/>
</dbReference>
<dbReference type="InterPro" id="IPR013765">
    <property type="entry name" value="DNA_recomb/repair_RecA"/>
</dbReference>
<dbReference type="InterPro" id="IPR020584">
    <property type="entry name" value="DNA_recomb/repair_RecA_CS"/>
</dbReference>
<dbReference type="InterPro" id="IPR027417">
    <property type="entry name" value="P-loop_NTPase"/>
</dbReference>
<dbReference type="InterPro" id="IPR049261">
    <property type="entry name" value="RecA-like_C"/>
</dbReference>
<dbReference type="InterPro" id="IPR049428">
    <property type="entry name" value="RecA-like_N"/>
</dbReference>
<dbReference type="InterPro" id="IPR020588">
    <property type="entry name" value="RecA_ATP-bd"/>
</dbReference>
<dbReference type="InterPro" id="IPR023400">
    <property type="entry name" value="RecA_C_sf"/>
</dbReference>
<dbReference type="InterPro" id="IPR020587">
    <property type="entry name" value="RecA_monomer-monomer_interface"/>
</dbReference>
<dbReference type="NCBIfam" id="TIGR02012">
    <property type="entry name" value="tigrfam_recA"/>
    <property type="match status" value="1"/>
</dbReference>
<dbReference type="PANTHER" id="PTHR45900:SF1">
    <property type="entry name" value="MITOCHONDRIAL DNA REPAIR PROTEIN RECA HOMOLOG-RELATED"/>
    <property type="match status" value="1"/>
</dbReference>
<dbReference type="PANTHER" id="PTHR45900">
    <property type="entry name" value="RECA"/>
    <property type="match status" value="1"/>
</dbReference>
<dbReference type="Pfam" id="PF00154">
    <property type="entry name" value="RecA"/>
    <property type="match status" value="1"/>
</dbReference>
<dbReference type="Pfam" id="PF21096">
    <property type="entry name" value="RecA_C"/>
    <property type="match status" value="1"/>
</dbReference>
<dbReference type="PRINTS" id="PR00142">
    <property type="entry name" value="RECA"/>
</dbReference>
<dbReference type="SMART" id="SM00382">
    <property type="entry name" value="AAA"/>
    <property type="match status" value="1"/>
</dbReference>
<dbReference type="SUPFAM" id="SSF52540">
    <property type="entry name" value="P-loop containing nucleoside triphosphate hydrolases"/>
    <property type="match status" value="1"/>
</dbReference>
<dbReference type="SUPFAM" id="SSF54752">
    <property type="entry name" value="RecA protein, C-terminal domain"/>
    <property type="match status" value="1"/>
</dbReference>
<dbReference type="PROSITE" id="PS00321">
    <property type="entry name" value="RECA_1"/>
    <property type="match status" value="1"/>
</dbReference>
<dbReference type="PROSITE" id="PS50162">
    <property type="entry name" value="RECA_2"/>
    <property type="match status" value="1"/>
</dbReference>
<dbReference type="PROSITE" id="PS50163">
    <property type="entry name" value="RECA_3"/>
    <property type="match status" value="1"/>
</dbReference>
<sequence length="365" mass="38989">MSKNVVSLVKDDSDKKKALDAALSQIERSFGKGSIMRLGKNEQIVEIESVSTGSLGLDIALGIGGLPRGRIIEIYGPESSGKTTLALQTVAEAQKSGGVCAFVDAEHALDPIYARKLGVQLDDLLISQPDTGEQALEIADTLVRSGAVDVLVIDSVAALTPKAELEGEMGDSLPGLQARLMSQALRKLTGSISKSNTMVIFINQIRMKIGVMFGSPETTTGGNALKFYASVRLDIRRIGAIKDRDEVVGNQTRVKVVKNKVAPPFKQVEFDIMYGEGISKMGELVDLGSKAGIVEKSGSWFSYNSQRIGQGRENAKQFLRDNPEMAAEIEAAIRANAGLIAEKIMDVPGSERDGDEDAGDMEASA</sequence>
<accession>A7HWA4</accession>
<reference key="1">
    <citation type="journal article" date="2011" name="Stand. Genomic Sci.">
        <title>Complete genome sequence of Parvibaculum lavamentivorans type strain (DS-1(T)).</title>
        <authorList>
            <person name="Schleheck D."/>
            <person name="Weiss M."/>
            <person name="Pitluck S."/>
            <person name="Bruce D."/>
            <person name="Land M.L."/>
            <person name="Han S."/>
            <person name="Saunders E."/>
            <person name="Tapia R."/>
            <person name="Detter C."/>
            <person name="Brettin T."/>
            <person name="Han J."/>
            <person name="Woyke T."/>
            <person name="Goodwin L."/>
            <person name="Pennacchio L."/>
            <person name="Nolan M."/>
            <person name="Cook A.M."/>
            <person name="Kjelleberg S."/>
            <person name="Thomas T."/>
        </authorList>
    </citation>
    <scope>NUCLEOTIDE SEQUENCE [LARGE SCALE GENOMIC DNA]</scope>
    <source>
        <strain>DS-1 / DSM 13023 / NCIMB 13966</strain>
    </source>
</reference>
<organism>
    <name type="scientific">Parvibaculum lavamentivorans (strain DS-1 / DSM 13023 / NCIMB 13966)</name>
    <dbReference type="NCBI Taxonomy" id="402881"/>
    <lineage>
        <taxon>Bacteria</taxon>
        <taxon>Pseudomonadati</taxon>
        <taxon>Pseudomonadota</taxon>
        <taxon>Alphaproteobacteria</taxon>
        <taxon>Hyphomicrobiales</taxon>
        <taxon>Parvibaculaceae</taxon>
        <taxon>Parvibaculum</taxon>
    </lineage>
</organism>
<feature type="chain" id="PRO_1000078674" description="Protein RecA">
    <location>
        <begin position="1"/>
        <end position="365"/>
    </location>
</feature>
<feature type="region of interest" description="Disordered" evidence="2">
    <location>
        <begin position="346"/>
        <end position="365"/>
    </location>
</feature>
<feature type="compositionally biased region" description="Acidic residues" evidence="2">
    <location>
        <begin position="353"/>
        <end position="365"/>
    </location>
</feature>
<feature type="binding site" evidence="1">
    <location>
        <begin position="76"/>
        <end position="83"/>
    </location>
    <ligand>
        <name>ATP</name>
        <dbReference type="ChEBI" id="CHEBI:30616"/>
    </ligand>
</feature>
<comment type="function">
    <text evidence="1">Can catalyze the hydrolysis of ATP in the presence of single-stranded DNA, the ATP-dependent uptake of single-stranded DNA by duplex DNA, and the ATP-dependent hybridization of homologous single-stranded DNAs. It interacts with LexA causing its activation and leading to its autocatalytic cleavage.</text>
</comment>
<comment type="subcellular location">
    <subcellularLocation>
        <location evidence="1">Cytoplasm</location>
    </subcellularLocation>
</comment>
<comment type="similarity">
    <text evidence="1">Belongs to the RecA family.</text>
</comment>
<proteinExistence type="inferred from homology"/>
<protein>
    <recommendedName>
        <fullName evidence="1">Protein RecA</fullName>
    </recommendedName>
    <alternativeName>
        <fullName evidence="1">Recombinase A</fullName>
    </alternativeName>
</protein>
<evidence type="ECO:0000255" key="1">
    <source>
        <dbReference type="HAMAP-Rule" id="MF_00268"/>
    </source>
</evidence>
<evidence type="ECO:0000256" key="2">
    <source>
        <dbReference type="SAM" id="MobiDB-lite"/>
    </source>
</evidence>
<gene>
    <name evidence="1" type="primary">recA</name>
    <name type="ordered locus">Plav_2578</name>
</gene>
<name>RECA_PARL1</name>